<organism>
    <name type="scientific">Pseudomonas fluorescens (strain Pf0-1)</name>
    <dbReference type="NCBI Taxonomy" id="205922"/>
    <lineage>
        <taxon>Bacteria</taxon>
        <taxon>Pseudomonadati</taxon>
        <taxon>Pseudomonadota</taxon>
        <taxon>Gammaproteobacteria</taxon>
        <taxon>Pseudomonadales</taxon>
        <taxon>Pseudomonadaceae</taxon>
        <taxon>Pseudomonas</taxon>
    </lineage>
</organism>
<gene>
    <name evidence="1" type="primary">tyrS</name>
    <name type="ordered locus">Pfl01_5098</name>
</gene>
<proteinExistence type="inferred from homology"/>
<reference key="1">
    <citation type="journal article" date="2009" name="Genome Biol.">
        <title>Genomic and genetic analyses of diversity and plant interactions of Pseudomonas fluorescens.</title>
        <authorList>
            <person name="Silby M.W."/>
            <person name="Cerdeno-Tarraga A.M."/>
            <person name="Vernikos G.S."/>
            <person name="Giddens S.R."/>
            <person name="Jackson R.W."/>
            <person name="Preston G.M."/>
            <person name="Zhang X.-X."/>
            <person name="Moon C.D."/>
            <person name="Gehrig S.M."/>
            <person name="Godfrey S.A.C."/>
            <person name="Knight C.G."/>
            <person name="Malone J.G."/>
            <person name="Robinson Z."/>
            <person name="Spiers A.J."/>
            <person name="Harris S."/>
            <person name="Challis G.L."/>
            <person name="Yaxley A.M."/>
            <person name="Harris D."/>
            <person name="Seeger K."/>
            <person name="Murphy L."/>
            <person name="Rutter S."/>
            <person name="Squares R."/>
            <person name="Quail M.A."/>
            <person name="Saunders E."/>
            <person name="Mavromatis K."/>
            <person name="Brettin T.S."/>
            <person name="Bentley S.D."/>
            <person name="Hothersall J."/>
            <person name="Stephens E."/>
            <person name="Thomas C.M."/>
            <person name="Parkhill J."/>
            <person name="Levy S.B."/>
            <person name="Rainey P.B."/>
            <person name="Thomson N.R."/>
        </authorList>
    </citation>
    <scope>NUCLEOTIDE SEQUENCE [LARGE SCALE GENOMIC DNA]</scope>
    <source>
        <strain>Pf0-1</strain>
    </source>
</reference>
<feature type="chain" id="PRO_0000236752" description="Tyrosine--tRNA ligase">
    <location>
        <begin position="1"/>
        <end position="399"/>
    </location>
</feature>
<feature type="domain" description="S4 RNA-binding" evidence="1">
    <location>
        <begin position="336"/>
        <end position="396"/>
    </location>
</feature>
<feature type="short sequence motif" description="'HIGH' region">
    <location>
        <begin position="42"/>
        <end position="51"/>
    </location>
</feature>
<feature type="short sequence motif" description="'KMSKS' region">
    <location>
        <begin position="226"/>
        <end position="230"/>
    </location>
</feature>
<feature type="binding site" evidence="1">
    <location>
        <position position="229"/>
    </location>
    <ligand>
        <name>ATP</name>
        <dbReference type="ChEBI" id="CHEBI:30616"/>
    </ligand>
</feature>
<name>SYY_PSEPF</name>
<accession>Q3K5W9</accession>
<sequence>MKSVEEQLALIKRGAEELLVESELIEKLKRGQPLRIKAGFDPTAPDLHLGHTVLINKLRQFQELGHQVIFLIGDFTGMIGDPSGKSATRPPLTREQVLENAETYKTQVFKILDPAKTEVAFNSTWMDQMGPADFIRLTSQYTVARMLERDDFDKRYTTNQPIAIHEFLYPLVQGYDSVALRADVELGGTDQKFNLLMGRELQRGYGQEAQCILTMPLLEGLDGVKKMSKSLGNYVGIQEAPGVMYSKLVSIPDALMWRYFELLSFRSMDEINAFRADVEAGANPRDIKIKLAEEIVARFHGEEAAANAHRGAGNRMKDGELPDDLPEVELTAAEDMPIAAVLNKAGLVKNSAAARDLLASGGVRVDGEVVDRSFIYVLGATHVCQAGKKAFARITLKSE</sequence>
<evidence type="ECO:0000255" key="1">
    <source>
        <dbReference type="HAMAP-Rule" id="MF_02007"/>
    </source>
</evidence>
<dbReference type="EC" id="6.1.1.1" evidence="1"/>
<dbReference type="EMBL" id="CP000094">
    <property type="protein sequence ID" value="ABA76835.1"/>
    <property type="molecule type" value="Genomic_DNA"/>
</dbReference>
<dbReference type="RefSeq" id="WP_011336180.1">
    <property type="nucleotide sequence ID" value="NC_007492.2"/>
</dbReference>
<dbReference type="SMR" id="Q3K5W9"/>
<dbReference type="KEGG" id="pfo:Pfl01_5098"/>
<dbReference type="eggNOG" id="COG0162">
    <property type="taxonomic scope" value="Bacteria"/>
</dbReference>
<dbReference type="HOGENOM" id="CLU_024003_5_0_6"/>
<dbReference type="Proteomes" id="UP000002704">
    <property type="component" value="Chromosome"/>
</dbReference>
<dbReference type="GO" id="GO:0005829">
    <property type="term" value="C:cytosol"/>
    <property type="evidence" value="ECO:0007669"/>
    <property type="project" value="TreeGrafter"/>
</dbReference>
<dbReference type="GO" id="GO:0005524">
    <property type="term" value="F:ATP binding"/>
    <property type="evidence" value="ECO:0007669"/>
    <property type="project" value="UniProtKB-UniRule"/>
</dbReference>
<dbReference type="GO" id="GO:0003723">
    <property type="term" value="F:RNA binding"/>
    <property type="evidence" value="ECO:0007669"/>
    <property type="project" value="UniProtKB-KW"/>
</dbReference>
<dbReference type="GO" id="GO:0004831">
    <property type="term" value="F:tyrosine-tRNA ligase activity"/>
    <property type="evidence" value="ECO:0007669"/>
    <property type="project" value="UniProtKB-UniRule"/>
</dbReference>
<dbReference type="GO" id="GO:0006437">
    <property type="term" value="P:tyrosyl-tRNA aminoacylation"/>
    <property type="evidence" value="ECO:0007669"/>
    <property type="project" value="UniProtKB-UniRule"/>
</dbReference>
<dbReference type="CDD" id="cd00165">
    <property type="entry name" value="S4"/>
    <property type="match status" value="1"/>
</dbReference>
<dbReference type="CDD" id="cd00805">
    <property type="entry name" value="TyrRS_core"/>
    <property type="match status" value="1"/>
</dbReference>
<dbReference type="FunFam" id="1.10.240.10:FF:000006">
    <property type="entry name" value="Tyrosine--tRNA ligase"/>
    <property type="match status" value="1"/>
</dbReference>
<dbReference type="FunFam" id="3.40.50.620:FF:000061">
    <property type="entry name" value="Tyrosine--tRNA ligase"/>
    <property type="match status" value="1"/>
</dbReference>
<dbReference type="Gene3D" id="3.40.50.620">
    <property type="entry name" value="HUPs"/>
    <property type="match status" value="1"/>
</dbReference>
<dbReference type="Gene3D" id="3.10.290.10">
    <property type="entry name" value="RNA-binding S4 domain"/>
    <property type="match status" value="1"/>
</dbReference>
<dbReference type="Gene3D" id="1.10.240.10">
    <property type="entry name" value="Tyrosyl-Transfer RNA Synthetase"/>
    <property type="match status" value="1"/>
</dbReference>
<dbReference type="HAMAP" id="MF_02007">
    <property type="entry name" value="Tyr_tRNA_synth_type2"/>
    <property type="match status" value="1"/>
</dbReference>
<dbReference type="InterPro" id="IPR001412">
    <property type="entry name" value="aa-tRNA-synth_I_CS"/>
</dbReference>
<dbReference type="InterPro" id="IPR002305">
    <property type="entry name" value="aa-tRNA-synth_Ic"/>
</dbReference>
<dbReference type="InterPro" id="IPR014729">
    <property type="entry name" value="Rossmann-like_a/b/a_fold"/>
</dbReference>
<dbReference type="InterPro" id="IPR002942">
    <property type="entry name" value="S4_RNA-bd"/>
</dbReference>
<dbReference type="InterPro" id="IPR036986">
    <property type="entry name" value="S4_RNA-bd_sf"/>
</dbReference>
<dbReference type="InterPro" id="IPR002307">
    <property type="entry name" value="Tyr-tRNA-ligase"/>
</dbReference>
<dbReference type="InterPro" id="IPR024088">
    <property type="entry name" value="Tyr-tRNA-ligase_bac-type"/>
</dbReference>
<dbReference type="InterPro" id="IPR024108">
    <property type="entry name" value="Tyr-tRNA-ligase_bac_2"/>
</dbReference>
<dbReference type="NCBIfam" id="TIGR00234">
    <property type="entry name" value="tyrS"/>
    <property type="match status" value="1"/>
</dbReference>
<dbReference type="PANTHER" id="PTHR11766:SF1">
    <property type="entry name" value="TYROSINE--TRNA LIGASE"/>
    <property type="match status" value="1"/>
</dbReference>
<dbReference type="PANTHER" id="PTHR11766">
    <property type="entry name" value="TYROSYL-TRNA SYNTHETASE"/>
    <property type="match status" value="1"/>
</dbReference>
<dbReference type="Pfam" id="PF01479">
    <property type="entry name" value="S4"/>
    <property type="match status" value="1"/>
</dbReference>
<dbReference type="Pfam" id="PF00579">
    <property type="entry name" value="tRNA-synt_1b"/>
    <property type="match status" value="1"/>
</dbReference>
<dbReference type="PRINTS" id="PR01040">
    <property type="entry name" value="TRNASYNTHTYR"/>
</dbReference>
<dbReference type="SUPFAM" id="SSF55174">
    <property type="entry name" value="Alpha-L RNA-binding motif"/>
    <property type="match status" value="1"/>
</dbReference>
<dbReference type="SUPFAM" id="SSF52374">
    <property type="entry name" value="Nucleotidylyl transferase"/>
    <property type="match status" value="1"/>
</dbReference>
<dbReference type="PROSITE" id="PS00178">
    <property type="entry name" value="AA_TRNA_LIGASE_I"/>
    <property type="match status" value="1"/>
</dbReference>
<dbReference type="PROSITE" id="PS50889">
    <property type="entry name" value="S4"/>
    <property type="match status" value="1"/>
</dbReference>
<protein>
    <recommendedName>
        <fullName evidence="1">Tyrosine--tRNA ligase</fullName>
        <ecNumber evidence="1">6.1.1.1</ecNumber>
    </recommendedName>
    <alternativeName>
        <fullName evidence="1">Tyrosyl-tRNA synthetase</fullName>
        <shortName evidence="1">TyrRS</shortName>
    </alternativeName>
</protein>
<keyword id="KW-0030">Aminoacyl-tRNA synthetase</keyword>
<keyword id="KW-0067">ATP-binding</keyword>
<keyword id="KW-0963">Cytoplasm</keyword>
<keyword id="KW-0436">Ligase</keyword>
<keyword id="KW-0547">Nucleotide-binding</keyword>
<keyword id="KW-0648">Protein biosynthesis</keyword>
<keyword id="KW-0694">RNA-binding</keyword>
<comment type="function">
    <text evidence="1">Catalyzes the attachment of tyrosine to tRNA(Tyr) in a two-step reaction: tyrosine is first activated by ATP to form Tyr-AMP and then transferred to the acceptor end of tRNA(Tyr).</text>
</comment>
<comment type="catalytic activity">
    <reaction evidence="1">
        <text>tRNA(Tyr) + L-tyrosine + ATP = L-tyrosyl-tRNA(Tyr) + AMP + diphosphate + H(+)</text>
        <dbReference type="Rhea" id="RHEA:10220"/>
        <dbReference type="Rhea" id="RHEA-COMP:9706"/>
        <dbReference type="Rhea" id="RHEA-COMP:9707"/>
        <dbReference type="ChEBI" id="CHEBI:15378"/>
        <dbReference type="ChEBI" id="CHEBI:30616"/>
        <dbReference type="ChEBI" id="CHEBI:33019"/>
        <dbReference type="ChEBI" id="CHEBI:58315"/>
        <dbReference type="ChEBI" id="CHEBI:78442"/>
        <dbReference type="ChEBI" id="CHEBI:78536"/>
        <dbReference type="ChEBI" id="CHEBI:456215"/>
        <dbReference type="EC" id="6.1.1.1"/>
    </reaction>
</comment>
<comment type="subunit">
    <text evidence="1">Homodimer.</text>
</comment>
<comment type="subcellular location">
    <subcellularLocation>
        <location evidence="1">Cytoplasm</location>
    </subcellularLocation>
</comment>
<comment type="similarity">
    <text evidence="1">Belongs to the class-I aminoacyl-tRNA synthetase family. TyrS type 2 subfamily.</text>
</comment>